<keyword id="KW-0012">Acyltransferase</keyword>
<keyword id="KW-0963">Cytoplasm</keyword>
<keyword id="KW-1185">Reference proteome</keyword>
<keyword id="KW-0808">Transferase</keyword>
<comment type="function">
    <text evidence="1">Functions in the N-end rule pathway of protein degradation where it conjugates Leu, Phe and, less efficiently, Met from aminoacyl-tRNAs to the N-termini of proteins containing an N-terminal arginine or lysine.</text>
</comment>
<comment type="catalytic activity">
    <reaction evidence="1">
        <text>N-terminal L-lysyl-[protein] + L-leucyl-tRNA(Leu) = N-terminal L-leucyl-L-lysyl-[protein] + tRNA(Leu) + H(+)</text>
        <dbReference type="Rhea" id="RHEA:12340"/>
        <dbReference type="Rhea" id="RHEA-COMP:9613"/>
        <dbReference type="Rhea" id="RHEA-COMP:9622"/>
        <dbReference type="Rhea" id="RHEA-COMP:12670"/>
        <dbReference type="Rhea" id="RHEA-COMP:12671"/>
        <dbReference type="ChEBI" id="CHEBI:15378"/>
        <dbReference type="ChEBI" id="CHEBI:65249"/>
        <dbReference type="ChEBI" id="CHEBI:78442"/>
        <dbReference type="ChEBI" id="CHEBI:78494"/>
        <dbReference type="ChEBI" id="CHEBI:133043"/>
        <dbReference type="EC" id="2.3.2.6"/>
    </reaction>
</comment>
<comment type="catalytic activity">
    <reaction evidence="1">
        <text>N-terminal L-arginyl-[protein] + L-leucyl-tRNA(Leu) = N-terminal L-leucyl-L-arginyl-[protein] + tRNA(Leu) + H(+)</text>
        <dbReference type="Rhea" id="RHEA:50416"/>
        <dbReference type="Rhea" id="RHEA-COMP:9613"/>
        <dbReference type="Rhea" id="RHEA-COMP:9622"/>
        <dbReference type="Rhea" id="RHEA-COMP:12672"/>
        <dbReference type="Rhea" id="RHEA-COMP:12673"/>
        <dbReference type="ChEBI" id="CHEBI:15378"/>
        <dbReference type="ChEBI" id="CHEBI:64719"/>
        <dbReference type="ChEBI" id="CHEBI:78442"/>
        <dbReference type="ChEBI" id="CHEBI:78494"/>
        <dbReference type="ChEBI" id="CHEBI:133044"/>
        <dbReference type="EC" id="2.3.2.6"/>
    </reaction>
</comment>
<comment type="catalytic activity">
    <reaction evidence="1">
        <text>L-phenylalanyl-tRNA(Phe) + an N-terminal L-alpha-aminoacyl-[protein] = an N-terminal L-phenylalanyl-L-alpha-aminoacyl-[protein] + tRNA(Phe)</text>
        <dbReference type="Rhea" id="RHEA:43632"/>
        <dbReference type="Rhea" id="RHEA-COMP:9668"/>
        <dbReference type="Rhea" id="RHEA-COMP:9699"/>
        <dbReference type="Rhea" id="RHEA-COMP:10636"/>
        <dbReference type="Rhea" id="RHEA-COMP:10637"/>
        <dbReference type="ChEBI" id="CHEBI:78442"/>
        <dbReference type="ChEBI" id="CHEBI:78531"/>
        <dbReference type="ChEBI" id="CHEBI:78597"/>
        <dbReference type="ChEBI" id="CHEBI:83561"/>
        <dbReference type="EC" id="2.3.2.6"/>
    </reaction>
</comment>
<comment type="subcellular location">
    <subcellularLocation>
        <location evidence="1">Cytoplasm</location>
    </subcellularLocation>
</comment>
<comment type="similarity">
    <text evidence="1">Belongs to the L/F-transferase family.</text>
</comment>
<feature type="chain" id="PRO_0000304351" description="Leucyl/phenylalanyl-tRNA--protein transferase">
    <location>
        <begin position="1"/>
        <end position="250"/>
    </location>
</feature>
<reference key="1">
    <citation type="journal article" date="2006" name="Nat. Biotechnol.">
        <title>Genome sequence of the bioplastic-producing 'Knallgas' bacterium Ralstonia eutropha H16.</title>
        <authorList>
            <person name="Pohlmann A."/>
            <person name="Fricke W.F."/>
            <person name="Reinecke F."/>
            <person name="Kusian B."/>
            <person name="Liesegang H."/>
            <person name="Cramm R."/>
            <person name="Eitinger T."/>
            <person name="Ewering C."/>
            <person name="Poetter M."/>
            <person name="Schwartz E."/>
            <person name="Strittmatter A."/>
            <person name="Voss I."/>
            <person name="Gottschalk G."/>
            <person name="Steinbuechel A."/>
            <person name="Friedrich B."/>
            <person name="Bowien B."/>
        </authorList>
    </citation>
    <scope>NUCLEOTIDE SEQUENCE [LARGE SCALE GENOMIC DNA]</scope>
    <source>
        <strain>ATCC 17699 / DSM 428 / KCTC 22496 / NCIMB 10442 / H16 / Stanier 337</strain>
    </source>
</reference>
<proteinExistence type="inferred from homology"/>
<name>LFTR_CUPNH</name>
<gene>
    <name evidence="1" type="primary">aat</name>
    <name type="ordered locus">H16_A1403</name>
</gene>
<sequence>MIAWLDPQDPFPPVDEALGPDSEAPGLLAASRDLSPQRLLLAYRQGIFPWYSSGQPVLWWSTDPRMVLAPPALRVSLNLRKTLRRVLRDADWEIRVDDDFLAVMRACATTPRDGQDGTWITDDIIAAYGTLHRNGMAHSVESWYRGERVGGLYGVALGRMFFGESMFAHRTDASKIALAALCAFLGNHGVAMIDCQQETDHLASLGARPIPRAEFVAHVRAATALPAISPWRFDKSVLERWAGTPAAPAG</sequence>
<organism>
    <name type="scientific">Cupriavidus necator (strain ATCC 17699 / DSM 428 / KCTC 22496 / NCIMB 10442 / H16 / Stanier 337)</name>
    <name type="common">Ralstonia eutropha</name>
    <dbReference type="NCBI Taxonomy" id="381666"/>
    <lineage>
        <taxon>Bacteria</taxon>
        <taxon>Pseudomonadati</taxon>
        <taxon>Pseudomonadota</taxon>
        <taxon>Betaproteobacteria</taxon>
        <taxon>Burkholderiales</taxon>
        <taxon>Burkholderiaceae</taxon>
        <taxon>Cupriavidus</taxon>
    </lineage>
</organism>
<dbReference type="EC" id="2.3.2.6" evidence="1"/>
<dbReference type="EMBL" id="AM260479">
    <property type="protein sequence ID" value="CAJ92539.1"/>
    <property type="molecule type" value="Genomic_DNA"/>
</dbReference>
<dbReference type="RefSeq" id="WP_011615056.1">
    <property type="nucleotide sequence ID" value="NC_008313.1"/>
</dbReference>
<dbReference type="SMR" id="Q0KBT2"/>
<dbReference type="STRING" id="381666.H16_A1403"/>
<dbReference type="KEGG" id="reh:H16_A1403"/>
<dbReference type="PATRIC" id="fig|381666.6.peg.1792"/>
<dbReference type="eggNOG" id="COG2360">
    <property type="taxonomic scope" value="Bacteria"/>
</dbReference>
<dbReference type="HOGENOM" id="CLU_075045_0_0_4"/>
<dbReference type="OrthoDB" id="9790282at2"/>
<dbReference type="Proteomes" id="UP000008210">
    <property type="component" value="Chromosome 1"/>
</dbReference>
<dbReference type="GO" id="GO:0005737">
    <property type="term" value="C:cytoplasm"/>
    <property type="evidence" value="ECO:0007669"/>
    <property type="project" value="UniProtKB-SubCell"/>
</dbReference>
<dbReference type="GO" id="GO:0008914">
    <property type="term" value="F:leucyl-tRNA--protein transferase activity"/>
    <property type="evidence" value="ECO:0007669"/>
    <property type="project" value="UniProtKB-UniRule"/>
</dbReference>
<dbReference type="GO" id="GO:0030163">
    <property type="term" value="P:protein catabolic process"/>
    <property type="evidence" value="ECO:0007669"/>
    <property type="project" value="UniProtKB-UniRule"/>
</dbReference>
<dbReference type="Gene3D" id="3.40.630.70">
    <property type="entry name" value="Leucyl/phenylalanyl-tRNA-protein transferase, C-terminal domain"/>
    <property type="match status" value="1"/>
</dbReference>
<dbReference type="Gene3D" id="3.30.70.3550">
    <property type="entry name" value="Leucyl/phenylalanyl-tRNA-protein transferase, N-terminal domain"/>
    <property type="match status" value="1"/>
</dbReference>
<dbReference type="HAMAP" id="MF_00688">
    <property type="entry name" value="Leu_Phe_trans"/>
    <property type="match status" value="1"/>
</dbReference>
<dbReference type="InterPro" id="IPR016181">
    <property type="entry name" value="Acyl_CoA_acyltransferase"/>
</dbReference>
<dbReference type="InterPro" id="IPR004616">
    <property type="entry name" value="Leu/Phe-tRNA_Trfase"/>
</dbReference>
<dbReference type="InterPro" id="IPR042203">
    <property type="entry name" value="Leu/Phe-tRNA_Trfase_C"/>
</dbReference>
<dbReference type="InterPro" id="IPR042221">
    <property type="entry name" value="Leu/Phe-tRNA_Trfase_N"/>
</dbReference>
<dbReference type="NCBIfam" id="TIGR00667">
    <property type="entry name" value="aat"/>
    <property type="match status" value="1"/>
</dbReference>
<dbReference type="PANTHER" id="PTHR30098">
    <property type="entry name" value="LEUCYL/PHENYLALANYL-TRNA--PROTEIN TRANSFERASE"/>
    <property type="match status" value="1"/>
</dbReference>
<dbReference type="PANTHER" id="PTHR30098:SF2">
    <property type="entry name" value="LEUCYL_PHENYLALANYL-TRNA--PROTEIN TRANSFERASE"/>
    <property type="match status" value="1"/>
</dbReference>
<dbReference type="Pfam" id="PF03588">
    <property type="entry name" value="Leu_Phe_trans"/>
    <property type="match status" value="1"/>
</dbReference>
<dbReference type="SUPFAM" id="SSF55729">
    <property type="entry name" value="Acyl-CoA N-acyltransferases (Nat)"/>
    <property type="match status" value="1"/>
</dbReference>
<evidence type="ECO:0000255" key="1">
    <source>
        <dbReference type="HAMAP-Rule" id="MF_00688"/>
    </source>
</evidence>
<protein>
    <recommendedName>
        <fullName evidence="1">Leucyl/phenylalanyl-tRNA--protein transferase</fullName>
        <ecNumber evidence="1">2.3.2.6</ecNumber>
    </recommendedName>
    <alternativeName>
        <fullName evidence="1">L/F-transferase</fullName>
    </alternativeName>
    <alternativeName>
        <fullName evidence="1">Leucyltransferase</fullName>
    </alternativeName>
    <alternativeName>
        <fullName evidence="1">Phenyalanyltransferase</fullName>
    </alternativeName>
</protein>
<accession>Q0KBT2</accession>